<gene>
    <name type="primary">hetN</name>
    <name type="ordered locus">alr5358</name>
</gene>
<evidence type="ECO:0000250" key="1"/>
<evidence type="ECO:0000255" key="2">
    <source>
        <dbReference type="PROSITE-ProRule" id="PRU10001"/>
    </source>
</evidence>
<evidence type="ECO:0000305" key="3"/>
<protein>
    <recommendedName>
        <fullName>Ketoacyl reductase HetN</fullName>
        <ecNumber>1.3.1.-</ecNumber>
    </recommendedName>
</protein>
<accession>P37694</accession>
<comment type="function">
    <text>May be involved in repressing heterocyst differentiation and may be essential for preventing all vegetative cells from differentiating.</text>
</comment>
<comment type="similarity">
    <text evidence="3">Belongs to the short-chain dehydrogenases/reductases (SDR) family.</text>
</comment>
<organism>
    <name type="scientific">Nostoc sp. (strain PCC 7120 / SAG 25.82 / UTEX 2576)</name>
    <dbReference type="NCBI Taxonomy" id="103690"/>
    <lineage>
        <taxon>Bacteria</taxon>
        <taxon>Bacillati</taxon>
        <taxon>Cyanobacteriota</taxon>
        <taxon>Cyanophyceae</taxon>
        <taxon>Nostocales</taxon>
        <taxon>Nostocaceae</taxon>
        <taxon>Nostoc</taxon>
    </lineage>
</organism>
<keyword id="KW-0364">Heterocyst</keyword>
<keyword id="KW-0560">Oxidoreductase</keyword>
<keyword id="KW-1185">Reference proteome</keyword>
<proteinExistence type="inferred from homology"/>
<dbReference type="EC" id="1.3.1.-"/>
<dbReference type="EMBL" id="L22883">
    <property type="protein sequence ID" value="AAA22002.1"/>
    <property type="molecule type" value="Genomic_DNA"/>
</dbReference>
<dbReference type="EMBL" id="BA000019">
    <property type="protein sequence ID" value="BAB77057.1"/>
    <property type="molecule type" value="Genomic_DNA"/>
</dbReference>
<dbReference type="PIR" id="AF2475">
    <property type="entry name" value="AF2475"/>
</dbReference>
<dbReference type="PIR" id="C55210">
    <property type="entry name" value="C55210"/>
</dbReference>
<dbReference type="RefSeq" id="WP_010999482.1">
    <property type="nucleotide sequence ID" value="NZ_RSCN01000005.1"/>
</dbReference>
<dbReference type="SMR" id="P37694"/>
<dbReference type="STRING" id="103690.gene:10497420"/>
<dbReference type="KEGG" id="ana:alr5358"/>
<dbReference type="eggNOG" id="COG0300">
    <property type="taxonomic scope" value="Bacteria"/>
</dbReference>
<dbReference type="OrthoDB" id="9785520at2"/>
<dbReference type="Proteomes" id="UP000002483">
    <property type="component" value="Chromosome"/>
</dbReference>
<dbReference type="GO" id="GO:0016020">
    <property type="term" value="C:membrane"/>
    <property type="evidence" value="ECO:0007669"/>
    <property type="project" value="TreeGrafter"/>
</dbReference>
<dbReference type="GO" id="GO:0016491">
    <property type="term" value="F:oxidoreductase activity"/>
    <property type="evidence" value="ECO:0007669"/>
    <property type="project" value="UniProtKB-KW"/>
</dbReference>
<dbReference type="GO" id="GO:0043158">
    <property type="term" value="P:heterocyst development"/>
    <property type="evidence" value="ECO:0007669"/>
    <property type="project" value="UniProtKB-KW"/>
</dbReference>
<dbReference type="CDD" id="cd08932">
    <property type="entry name" value="HetN_like_SDR_c"/>
    <property type="match status" value="1"/>
</dbReference>
<dbReference type="Gene3D" id="3.40.50.720">
    <property type="entry name" value="NAD(P)-binding Rossmann-like Domain"/>
    <property type="match status" value="1"/>
</dbReference>
<dbReference type="InterPro" id="IPR036291">
    <property type="entry name" value="NAD(P)-bd_dom_sf"/>
</dbReference>
<dbReference type="InterPro" id="IPR020904">
    <property type="entry name" value="Sc_DH/Rdtase_CS"/>
</dbReference>
<dbReference type="InterPro" id="IPR002347">
    <property type="entry name" value="SDR_fam"/>
</dbReference>
<dbReference type="PANTHER" id="PTHR44196">
    <property type="entry name" value="DEHYDROGENASE/REDUCTASE SDR FAMILY MEMBER 7B"/>
    <property type="match status" value="1"/>
</dbReference>
<dbReference type="PANTHER" id="PTHR44196:SF1">
    <property type="entry name" value="DEHYDROGENASE_REDUCTASE SDR FAMILY MEMBER 7B"/>
    <property type="match status" value="1"/>
</dbReference>
<dbReference type="Pfam" id="PF00106">
    <property type="entry name" value="adh_short"/>
    <property type="match status" value="1"/>
</dbReference>
<dbReference type="PIRSF" id="PIRSF000126">
    <property type="entry name" value="11-beta-HSD1"/>
    <property type="match status" value="1"/>
</dbReference>
<dbReference type="PRINTS" id="PR00081">
    <property type="entry name" value="GDHRDH"/>
</dbReference>
<dbReference type="PRINTS" id="PR00080">
    <property type="entry name" value="SDRFAMILY"/>
</dbReference>
<dbReference type="SUPFAM" id="SSF51735">
    <property type="entry name" value="NAD(P)-binding Rossmann-fold domains"/>
    <property type="match status" value="1"/>
</dbReference>
<dbReference type="PROSITE" id="PS00061">
    <property type="entry name" value="ADH_SHORT"/>
    <property type="match status" value="1"/>
</dbReference>
<reference key="1">
    <citation type="journal article" date="1994" name="J. Bacteriol.">
        <title>Analysis of a Het- mutation in Anabaena sp. strain PCC 7120 implicates a secondary metabolite in the regulation of heterocyst spacing.</title>
        <authorList>
            <person name="Black T.A."/>
            <person name="Wolk C.P."/>
        </authorList>
    </citation>
    <scope>NUCLEOTIDE SEQUENCE [GENOMIC DNA]</scope>
</reference>
<reference key="2">
    <citation type="journal article" date="2001" name="DNA Res.">
        <title>Complete genomic sequence of the filamentous nitrogen-fixing cyanobacterium Anabaena sp. strain PCC 7120.</title>
        <authorList>
            <person name="Kaneko T."/>
            <person name="Nakamura Y."/>
            <person name="Wolk C.P."/>
            <person name="Kuritz T."/>
            <person name="Sasamoto S."/>
            <person name="Watanabe A."/>
            <person name="Iriguchi M."/>
            <person name="Ishikawa A."/>
            <person name="Kawashima K."/>
            <person name="Kimura T."/>
            <person name="Kishida Y."/>
            <person name="Kohara M."/>
            <person name="Matsumoto M."/>
            <person name="Matsuno A."/>
            <person name="Muraki A."/>
            <person name="Nakazaki N."/>
            <person name="Shimpo S."/>
            <person name="Sugimoto M."/>
            <person name="Takazawa M."/>
            <person name="Yamada M."/>
            <person name="Yasuda M."/>
            <person name="Tabata S."/>
        </authorList>
    </citation>
    <scope>NUCLEOTIDE SEQUENCE [LARGE SCALE GENOMIC DNA]</scope>
    <source>
        <strain>PCC 7120 / SAG 25.82 / UTEX 2576</strain>
    </source>
</reference>
<name>HETN_NOSS1</name>
<sequence>MTTLTGKTVLLTGASRGLGVYIARALAKEQATVVCVSRSQSGLAQTCNAVKAAGGKAIAIPFDVRNTSQLSALVQQAQDIVGPIDVLINNAGIEINGTFANYSLAEIQSIFNTNLLAAMELTRLLLPSMMERGSGRIVNIASLAGKKGVAFNSVYSASKAGLIMWTDAMRQELVGTGVNISVVCPGYVSQTGMTVDTRVSAPKLAGISTPKSVANAVVKAIKNKTTEVIVNQNPITESLTKLMLAVGQISPTSVDRIYRWFGVVDFNQKRAENRVKDGYVAVESHRS</sequence>
<feature type="chain" id="PRO_0000054710" description="Ketoacyl reductase HetN">
    <location>
        <begin position="1"/>
        <end position="287"/>
    </location>
</feature>
<feature type="active site" description="Proton acceptor" evidence="2">
    <location>
        <position position="155"/>
    </location>
</feature>
<feature type="binding site" evidence="1">
    <location>
        <begin position="11"/>
        <end position="35"/>
    </location>
    <ligand>
        <name>NAD(+)</name>
        <dbReference type="ChEBI" id="CHEBI:57540"/>
    </ligand>
</feature>
<feature type="binding site" evidence="1">
    <location>
        <position position="142"/>
    </location>
    <ligand>
        <name>substrate</name>
    </ligand>
</feature>
<feature type="sequence conflict" description="In Ref. 1; AAA22002." evidence="3" ref="1">
    <original>M</original>
    <variation>I</variation>
    <location>
        <position position="119"/>
    </location>
</feature>